<feature type="chain" id="PRO_0000383456" description="L-lactate dehydrogenase">
    <location>
        <begin position="1"/>
        <end position="381"/>
    </location>
</feature>
<feature type="domain" description="FMN hydroxy acid dehydrogenase" evidence="1">
    <location>
        <begin position="1"/>
        <end position="380"/>
    </location>
</feature>
<feature type="active site" description="Proton acceptor" evidence="1">
    <location>
        <position position="275"/>
    </location>
</feature>
<feature type="binding site" evidence="1">
    <location>
        <position position="24"/>
    </location>
    <ligand>
        <name>substrate</name>
    </ligand>
</feature>
<feature type="binding site" evidence="1">
    <location>
        <position position="106"/>
    </location>
    <ligand>
        <name>FMN</name>
        <dbReference type="ChEBI" id="CHEBI:58210"/>
    </ligand>
</feature>
<feature type="binding site" evidence="1">
    <location>
        <position position="127"/>
    </location>
    <ligand>
        <name>FMN</name>
        <dbReference type="ChEBI" id="CHEBI:58210"/>
    </ligand>
</feature>
<feature type="binding site" evidence="1">
    <location>
        <position position="129"/>
    </location>
    <ligand>
        <name>substrate</name>
    </ligand>
</feature>
<feature type="binding site" evidence="1">
    <location>
        <position position="155"/>
    </location>
    <ligand>
        <name>FMN</name>
        <dbReference type="ChEBI" id="CHEBI:58210"/>
    </ligand>
</feature>
<feature type="binding site" evidence="1">
    <location>
        <position position="164"/>
    </location>
    <ligand>
        <name>substrate</name>
    </ligand>
</feature>
<feature type="binding site" evidence="1">
    <location>
        <position position="251"/>
    </location>
    <ligand>
        <name>FMN</name>
        <dbReference type="ChEBI" id="CHEBI:58210"/>
    </ligand>
</feature>
<feature type="binding site" evidence="1">
    <location>
        <position position="278"/>
    </location>
    <ligand>
        <name>substrate</name>
    </ligand>
</feature>
<feature type="binding site" evidence="1">
    <location>
        <begin position="306"/>
        <end position="330"/>
    </location>
    <ligand>
        <name>FMN</name>
        <dbReference type="ChEBI" id="CHEBI:58210"/>
    </ligand>
</feature>
<evidence type="ECO:0000255" key="1">
    <source>
        <dbReference type="HAMAP-Rule" id="MF_01559"/>
    </source>
</evidence>
<protein>
    <recommendedName>
        <fullName evidence="1">L-lactate dehydrogenase</fullName>
        <ecNumber evidence="1">1.1.-.-</ecNumber>
    </recommendedName>
</protein>
<accession>B2JZQ1</accession>
<name>LLDD_YERPB</name>
<keyword id="KW-0997">Cell inner membrane</keyword>
<keyword id="KW-1003">Cell membrane</keyword>
<keyword id="KW-0285">Flavoprotein</keyword>
<keyword id="KW-0288">FMN</keyword>
<keyword id="KW-0472">Membrane</keyword>
<keyword id="KW-0560">Oxidoreductase</keyword>
<dbReference type="EC" id="1.1.-.-" evidence="1"/>
<dbReference type="EMBL" id="CP001048">
    <property type="protein sequence ID" value="ACC88661.1"/>
    <property type="molecule type" value="Genomic_DNA"/>
</dbReference>
<dbReference type="RefSeq" id="WP_002211919.1">
    <property type="nucleotide sequence ID" value="NZ_CP009780.1"/>
</dbReference>
<dbReference type="SMR" id="B2JZQ1"/>
<dbReference type="GeneID" id="57977002"/>
<dbReference type="KEGG" id="ypb:YPTS_1692"/>
<dbReference type="PATRIC" id="fig|502801.10.peg.1067"/>
<dbReference type="GO" id="GO:0005886">
    <property type="term" value="C:plasma membrane"/>
    <property type="evidence" value="ECO:0007669"/>
    <property type="project" value="UniProtKB-SubCell"/>
</dbReference>
<dbReference type="GO" id="GO:0010181">
    <property type="term" value="F:FMN binding"/>
    <property type="evidence" value="ECO:0007669"/>
    <property type="project" value="InterPro"/>
</dbReference>
<dbReference type="GO" id="GO:0004459">
    <property type="term" value="F:L-lactate dehydrogenase activity"/>
    <property type="evidence" value="ECO:0007669"/>
    <property type="project" value="UniProtKB-UniRule"/>
</dbReference>
<dbReference type="GO" id="GO:0009060">
    <property type="term" value="P:aerobic respiration"/>
    <property type="evidence" value="ECO:0007669"/>
    <property type="project" value="TreeGrafter"/>
</dbReference>
<dbReference type="GO" id="GO:0006089">
    <property type="term" value="P:lactate metabolic process"/>
    <property type="evidence" value="ECO:0007669"/>
    <property type="project" value="UniProtKB-UniRule"/>
</dbReference>
<dbReference type="CDD" id="cd02809">
    <property type="entry name" value="alpha_hydroxyacid_oxid_FMN"/>
    <property type="match status" value="1"/>
</dbReference>
<dbReference type="FunFam" id="3.20.20.70:FF:000029">
    <property type="entry name" value="L-lactate dehydrogenase"/>
    <property type="match status" value="1"/>
</dbReference>
<dbReference type="Gene3D" id="3.20.20.70">
    <property type="entry name" value="Aldolase class I"/>
    <property type="match status" value="1"/>
</dbReference>
<dbReference type="HAMAP" id="MF_01559">
    <property type="entry name" value="L_lact_dehydr"/>
    <property type="match status" value="1"/>
</dbReference>
<dbReference type="InterPro" id="IPR013785">
    <property type="entry name" value="Aldolase_TIM"/>
</dbReference>
<dbReference type="InterPro" id="IPR012133">
    <property type="entry name" value="Alpha-hydoxy_acid_DH_FMN"/>
</dbReference>
<dbReference type="InterPro" id="IPR000262">
    <property type="entry name" value="FMN-dep_DH"/>
</dbReference>
<dbReference type="InterPro" id="IPR037396">
    <property type="entry name" value="FMN_HAD"/>
</dbReference>
<dbReference type="InterPro" id="IPR008259">
    <property type="entry name" value="FMN_hydac_DH_AS"/>
</dbReference>
<dbReference type="InterPro" id="IPR020920">
    <property type="entry name" value="LldD"/>
</dbReference>
<dbReference type="NCBIfam" id="NF033901">
    <property type="entry name" value="L_lactate_LldD"/>
    <property type="match status" value="1"/>
</dbReference>
<dbReference type="NCBIfam" id="NF008398">
    <property type="entry name" value="PRK11197.1"/>
    <property type="match status" value="1"/>
</dbReference>
<dbReference type="PANTHER" id="PTHR10578:SF85">
    <property type="entry name" value="L-LACTATE DEHYDROGENASE"/>
    <property type="match status" value="1"/>
</dbReference>
<dbReference type="PANTHER" id="PTHR10578">
    <property type="entry name" value="S -2-HYDROXY-ACID OXIDASE-RELATED"/>
    <property type="match status" value="1"/>
</dbReference>
<dbReference type="Pfam" id="PF01070">
    <property type="entry name" value="FMN_dh"/>
    <property type="match status" value="1"/>
</dbReference>
<dbReference type="PIRSF" id="PIRSF000138">
    <property type="entry name" value="Al-hdrx_acd_dh"/>
    <property type="match status" value="1"/>
</dbReference>
<dbReference type="SUPFAM" id="SSF51395">
    <property type="entry name" value="FMN-linked oxidoreductases"/>
    <property type="match status" value="1"/>
</dbReference>
<dbReference type="PROSITE" id="PS00557">
    <property type="entry name" value="FMN_HYDROXY_ACID_DH_1"/>
    <property type="match status" value="1"/>
</dbReference>
<dbReference type="PROSITE" id="PS51349">
    <property type="entry name" value="FMN_HYDROXY_ACID_DH_2"/>
    <property type="match status" value="1"/>
</dbReference>
<sequence length="381" mass="41259">MIISASTDYRAAAQRKLPPFLFHYIDGGAYNEQTLRRNTADLADIALRQRVLKNMSELSLETQLFGETQAMPVVLGPVGLSGMYARRGEVQAARAADKKGIPFTLSTLSVCPIEEVAPAIARPMWFQLYVLKDRGFMRNALTRAQAAGVKTLVFTVDMPVPGARYRDAHSGMSGPNAAARRLLQAIAHPQWAWDVGLNGKPHDLGNISAYLGKPTTLEDYMGWIATNFDPSISWKDLEWVREFWQGPMIIKGILDPEDAKDAVKFGADGIVVSNHGGRQLDGVLSTARALPAIADAVKGDITILADSGIRTGLDVVRMIALGADSVLLGRAFVYALATAGEAGVINLLTLIEQEMRVAMTLTGAKRIADINRDSLAVSERG</sequence>
<comment type="function">
    <text evidence="1">Catalyzes the conversion of L-lactate to pyruvate. Is coupled to the respiratory chain.</text>
</comment>
<comment type="catalytic activity">
    <reaction evidence="1">
        <text>(S)-lactate + A = pyruvate + AH2</text>
        <dbReference type="Rhea" id="RHEA:45816"/>
        <dbReference type="ChEBI" id="CHEBI:13193"/>
        <dbReference type="ChEBI" id="CHEBI:15361"/>
        <dbReference type="ChEBI" id="CHEBI:16651"/>
        <dbReference type="ChEBI" id="CHEBI:17499"/>
    </reaction>
</comment>
<comment type="cofactor">
    <cofactor evidence="1">
        <name>FMN</name>
        <dbReference type="ChEBI" id="CHEBI:58210"/>
    </cofactor>
</comment>
<comment type="subcellular location">
    <subcellularLocation>
        <location evidence="1">Cell inner membrane</location>
        <topology evidence="1">Peripheral membrane protein</topology>
    </subcellularLocation>
</comment>
<comment type="similarity">
    <text evidence="1">Belongs to the FMN-dependent alpha-hydroxy acid dehydrogenase family.</text>
</comment>
<organism>
    <name type="scientific">Yersinia pseudotuberculosis serotype IB (strain PB1/+)</name>
    <dbReference type="NCBI Taxonomy" id="502801"/>
    <lineage>
        <taxon>Bacteria</taxon>
        <taxon>Pseudomonadati</taxon>
        <taxon>Pseudomonadota</taxon>
        <taxon>Gammaproteobacteria</taxon>
        <taxon>Enterobacterales</taxon>
        <taxon>Yersiniaceae</taxon>
        <taxon>Yersinia</taxon>
    </lineage>
</organism>
<reference key="1">
    <citation type="submission" date="2008-04" db="EMBL/GenBank/DDBJ databases">
        <title>Complete sequence of Yersinia pseudotuberculosis PB1/+.</title>
        <authorList>
            <person name="Copeland A."/>
            <person name="Lucas S."/>
            <person name="Lapidus A."/>
            <person name="Glavina del Rio T."/>
            <person name="Dalin E."/>
            <person name="Tice H."/>
            <person name="Bruce D."/>
            <person name="Goodwin L."/>
            <person name="Pitluck S."/>
            <person name="Munk A.C."/>
            <person name="Brettin T."/>
            <person name="Detter J.C."/>
            <person name="Han C."/>
            <person name="Tapia R."/>
            <person name="Schmutz J."/>
            <person name="Larimer F."/>
            <person name="Land M."/>
            <person name="Hauser L."/>
            <person name="Challacombe J.F."/>
            <person name="Green L."/>
            <person name="Lindler L.E."/>
            <person name="Nikolich M.P."/>
            <person name="Richardson P."/>
        </authorList>
    </citation>
    <scope>NUCLEOTIDE SEQUENCE [LARGE SCALE GENOMIC DNA]</scope>
    <source>
        <strain>PB1/+</strain>
    </source>
</reference>
<proteinExistence type="inferred from homology"/>
<gene>
    <name evidence="1" type="primary">lldD</name>
    <name type="ordered locus">YPTS_1692</name>
</gene>